<name>NADK_ECO8A</name>
<dbReference type="EC" id="2.7.1.23" evidence="1"/>
<dbReference type="EMBL" id="CU928160">
    <property type="protein sequence ID" value="CAQ99563.1"/>
    <property type="molecule type" value="Genomic_DNA"/>
</dbReference>
<dbReference type="RefSeq" id="WP_001059169.1">
    <property type="nucleotide sequence ID" value="NC_011741.1"/>
</dbReference>
<dbReference type="SMR" id="B7M984"/>
<dbReference type="GeneID" id="93774464"/>
<dbReference type="KEGG" id="ecr:ECIAI1_2736"/>
<dbReference type="HOGENOM" id="CLU_008831_0_1_6"/>
<dbReference type="GO" id="GO:0005737">
    <property type="term" value="C:cytoplasm"/>
    <property type="evidence" value="ECO:0007669"/>
    <property type="project" value="UniProtKB-SubCell"/>
</dbReference>
<dbReference type="GO" id="GO:0005524">
    <property type="term" value="F:ATP binding"/>
    <property type="evidence" value="ECO:0007669"/>
    <property type="project" value="UniProtKB-KW"/>
</dbReference>
<dbReference type="GO" id="GO:0046872">
    <property type="term" value="F:metal ion binding"/>
    <property type="evidence" value="ECO:0007669"/>
    <property type="project" value="UniProtKB-UniRule"/>
</dbReference>
<dbReference type="GO" id="GO:0051287">
    <property type="term" value="F:NAD binding"/>
    <property type="evidence" value="ECO:0007669"/>
    <property type="project" value="UniProtKB-ARBA"/>
</dbReference>
<dbReference type="GO" id="GO:0003951">
    <property type="term" value="F:NAD+ kinase activity"/>
    <property type="evidence" value="ECO:0007669"/>
    <property type="project" value="UniProtKB-UniRule"/>
</dbReference>
<dbReference type="GO" id="GO:0019674">
    <property type="term" value="P:NAD metabolic process"/>
    <property type="evidence" value="ECO:0007669"/>
    <property type="project" value="InterPro"/>
</dbReference>
<dbReference type="GO" id="GO:0006741">
    <property type="term" value="P:NADP biosynthetic process"/>
    <property type="evidence" value="ECO:0007669"/>
    <property type="project" value="UniProtKB-UniRule"/>
</dbReference>
<dbReference type="FunFam" id="2.60.200.30:FF:000001">
    <property type="entry name" value="NAD kinase"/>
    <property type="match status" value="1"/>
</dbReference>
<dbReference type="FunFam" id="3.40.50.10330:FF:000004">
    <property type="entry name" value="NAD kinase"/>
    <property type="match status" value="1"/>
</dbReference>
<dbReference type="Gene3D" id="3.40.50.10330">
    <property type="entry name" value="Probable inorganic polyphosphate/atp-NAD kinase, domain 1"/>
    <property type="match status" value="1"/>
</dbReference>
<dbReference type="Gene3D" id="2.60.200.30">
    <property type="entry name" value="Probable inorganic polyphosphate/atp-NAD kinase, domain 2"/>
    <property type="match status" value="1"/>
</dbReference>
<dbReference type="HAMAP" id="MF_00361">
    <property type="entry name" value="NAD_kinase"/>
    <property type="match status" value="1"/>
</dbReference>
<dbReference type="InterPro" id="IPR017438">
    <property type="entry name" value="ATP-NAD_kinase_N"/>
</dbReference>
<dbReference type="InterPro" id="IPR017437">
    <property type="entry name" value="ATP-NAD_kinase_PpnK-typ_C"/>
</dbReference>
<dbReference type="InterPro" id="IPR016064">
    <property type="entry name" value="NAD/diacylglycerol_kinase_sf"/>
</dbReference>
<dbReference type="InterPro" id="IPR002504">
    <property type="entry name" value="NADK"/>
</dbReference>
<dbReference type="NCBIfam" id="NF002306">
    <property type="entry name" value="PRK01231.1"/>
    <property type="match status" value="1"/>
</dbReference>
<dbReference type="NCBIfam" id="NF002893">
    <property type="entry name" value="PRK03378.1"/>
    <property type="match status" value="1"/>
</dbReference>
<dbReference type="PANTHER" id="PTHR20275">
    <property type="entry name" value="NAD KINASE"/>
    <property type="match status" value="1"/>
</dbReference>
<dbReference type="PANTHER" id="PTHR20275:SF0">
    <property type="entry name" value="NAD KINASE"/>
    <property type="match status" value="1"/>
</dbReference>
<dbReference type="Pfam" id="PF01513">
    <property type="entry name" value="NAD_kinase"/>
    <property type="match status" value="1"/>
</dbReference>
<dbReference type="Pfam" id="PF20143">
    <property type="entry name" value="NAD_kinase_C"/>
    <property type="match status" value="1"/>
</dbReference>
<dbReference type="SUPFAM" id="SSF111331">
    <property type="entry name" value="NAD kinase/diacylglycerol kinase-like"/>
    <property type="match status" value="1"/>
</dbReference>
<accession>B7M984</accession>
<evidence type="ECO:0000255" key="1">
    <source>
        <dbReference type="HAMAP-Rule" id="MF_00361"/>
    </source>
</evidence>
<comment type="function">
    <text evidence="1">Involved in the regulation of the intracellular balance of NAD and NADP, and is a key enzyme in the biosynthesis of NADP. Catalyzes specifically the phosphorylation on 2'-hydroxyl of the adenosine moiety of NAD to yield NADP.</text>
</comment>
<comment type="catalytic activity">
    <reaction evidence="1">
        <text>NAD(+) + ATP = ADP + NADP(+) + H(+)</text>
        <dbReference type="Rhea" id="RHEA:18629"/>
        <dbReference type="ChEBI" id="CHEBI:15378"/>
        <dbReference type="ChEBI" id="CHEBI:30616"/>
        <dbReference type="ChEBI" id="CHEBI:57540"/>
        <dbReference type="ChEBI" id="CHEBI:58349"/>
        <dbReference type="ChEBI" id="CHEBI:456216"/>
        <dbReference type="EC" id="2.7.1.23"/>
    </reaction>
</comment>
<comment type="cofactor">
    <cofactor evidence="1">
        <name>a divalent metal cation</name>
        <dbReference type="ChEBI" id="CHEBI:60240"/>
    </cofactor>
</comment>
<comment type="subcellular location">
    <subcellularLocation>
        <location evidence="1">Cytoplasm</location>
    </subcellularLocation>
</comment>
<comment type="similarity">
    <text evidence="1">Belongs to the NAD kinase family.</text>
</comment>
<organism>
    <name type="scientific">Escherichia coli O8 (strain IAI1)</name>
    <dbReference type="NCBI Taxonomy" id="585034"/>
    <lineage>
        <taxon>Bacteria</taxon>
        <taxon>Pseudomonadati</taxon>
        <taxon>Pseudomonadota</taxon>
        <taxon>Gammaproteobacteria</taxon>
        <taxon>Enterobacterales</taxon>
        <taxon>Enterobacteriaceae</taxon>
        <taxon>Escherichia</taxon>
    </lineage>
</organism>
<feature type="chain" id="PRO_1000120855" description="NAD kinase">
    <location>
        <begin position="1"/>
        <end position="292"/>
    </location>
</feature>
<feature type="active site" description="Proton acceptor" evidence="1">
    <location>
        <position position="73"/>
    </location>
</feature>
<feature type="binding site" evidence="1">
    <location>
        <begin position="73"/>
        <end position="74"/>
    </location>
    <ligand>
        <name>NAD(+)</name>
        <dbReference type="ChEBI" id="CHEBI:57540"/>
    </ligand>
</feature>
<feature type="binding site" evidence="1">
    <location>
        <begin position="147"/>
        <end position="148"/>
    </location>
    <ligand>
        <name>NAD(+)</name>
        <dbReference type="ChEBI" id="CHEBI:57540"/>
    </ligand>
</feature>
<feature type="binding site" evidence="1">
    <location>
        <position position="158"/>
    </location>
    <ligand>
        <name>NAD(+)</name>
        <dbReference type="ChEBI" id="CHEBI:57540"/>
    </ligand>
</feature>
<feature type="binding site" evidence="1">
    <location>
        <position position="175"/>
    </location>
    <ligand>
        <name>NAD(+)</name>
        <dbReference type="ChEBI" id="CHEBI:57540"/>
    </ligand>
</feature>
<feature type="binding site" evidence="1">
    <location>
        <position position="177"/>
    </location>
    <ligand>
        <name>NAD(+)</name>
        <dbReference type="ChEBI" id="CHEBI:57540"/>
    </ligand>
</feature>
<feature type="binding site" evidence="1">
    <location>
        <begin position="188"/>
        <end position="193"/>
    </location>
    <ligand>
        <name>NAD(+)</name>
        <dbReference type="ChEBI" id="CHEBI:57540"/>
    </ligand>
</feature>
<feature type="binding site" evidence="1">
    <location>
        <position position="247"/>
    </location>
    <ligand>
        <name>NAD(+)</name>
        <dbReference type="ChEBI" id="CHEBI:57540"/>
    </ligand>
</feature>
<protein>
    <recommendedName>
        <fullName evidence="1">NAD kinase</fullName>
        <ecNumber evidence="1">2.7.1.23</ecNumber>
    </recommendedName>
    <alternativeName>
        <fullName evidence="1">ATP-dependent NAD kinase</fullName>
    </alternativeName>
</protein>
<sequence>MNNHFKCIGIVGHPRHPTALTTHEMLYRWLCTKGYEVIVEQQIAHELQLKNVKTGTLAEIGQLADLAVVVGGDGNMLGAARTLARYDIKVIGINRGNLGFLTDLDPDNAQQQLADVLEGHYISEKRFLLEAQVCQQDCQKRISTAINEVVLHPGKVAHMIEFEVYIDEIFAFSQRSDGLIISTPTGSTAYSLSAGGPILTPSLDAITLVPMFPHTLSARPLVINSSSTIRLRFSHRRNDLEISCDSQIALPIQEGEDVLIRRCDYHLNLIHPKDYSYFNTLSTKLGWSKKLF</sequence>
<reference key="1">
    <citation type="journal article" date="2009" name="PLoS Genet.">
        <title>Organised genome dynamics in the Escherichia coli species results in highly diverse adaptive paths.</title>
        <authorList>
            <person name="Touchon M."/>
            <person name="Hoede C."/>
            <person name="Tenaillon O."/>
            <person name="Barbe V."/>
            <person name="Baeriswyl S."/>
            <person name="Bidet P."/>
            <person name="Bingen E."/>
            <person name="Bonacorsi S."/>
            <person name="Bouchier C."/>
            <person name="Bouvet O."/>
            <person name="Calteau A."/>
            <person name="Chiapello H."/>
            <person name="Clermont O."/>
            <person name="Cruveiller S."/>
            <person name="Danchin A."/>
            <person name="Diard M."/>
            <person name="Dossat C."/>
            <person name="Karoui M.E."/>
            <person name="Frapy E."/>
            <person name="Garry L."/>
            <person name="Ghigo J.M."/>
            <person name="Gilles A.M."/>
            <person name="Johnson J."/>
            <person name="Le Bouguenec C."/>
            <person name="Lescat M."/>
            <person name="Mangenot S."/>
            <person name="Martinez-Jehanne V."/>
            <person name="Matic I."/>
            <person name="Nassif X."/>
            <person name="Oztas S."/>
            <person name="Petit M.A."/>
            <person name="Pichon C."/>
            <person name="Rouy Z."/>
            <person name="Ruf C.S."/>
            <person name="Schneider D."/>
            <person name="Tourret J."/>
            <person name="Vacherie B."/>
            <person name="Vallenet D."/>
            <person name="Medigue C."/>
            <person name="Rocha E.P.C."/>
            <person name="Denamur E."/>
        </authorList>
    </citation>
    <scope>NUCLEOTIDE SEQUENCE [LARGE SCALE GENOMIC DNA]</scope>
    <source>
        <strain>IAI1</strain>
    </source>
</reference>
<keyword id="KW-0067">ATP-binding</keyword>
<keyword id="KW-0963">Cytoplasm</keyword>
<keyword id="KW-0418">Kinase</keyword>
<keyword id="KW-0520">NAD</keyword>
<keyword id="KW-0521">NADP</keyword>
<keyword id="KW-0547">Nucleotide-binding</keyword>
<keyword id="KW-0808">Transferase</keyword>
<gene>
    <name evidence="1" type="primary">nadK</name>
    <name type="ordered locus">ECIAI1_2736</name>
</gene>
<proteinExistence type="inferred from homology"/>